<accession>Q181S7</accession>
<name>MNME_CLOD6</name>
<proteinExistence type="inferred from homology"/>
<reference key="1">
    <citation type="journal article" date="2006" name="Nat. Genet.">
        <title>The multidrug-resistant human pathogen Clostridium difficile has a highly mobile, mosaic genome.</title>
        <authorList>
            <person name="Sebaihia M."/>
            <person name="Wren B.W."/>
            <person name="Mullany P."/>
            <person name="Fairweather N.F."/>
            <person name="Minton N."/>
            <person name="Stabler R."/>
            <person name="Thomson N.R."/>
            <person name="Roberts A.P."/>
            <person name="Cerdeno-Tarraga A.M."/>
            <person name="Wang H."/>
            <person name="Holden M.T.G."/>
            <person name="Wright A."/>
            <person name="Churcher C."/>
            <person name="Quail M.A."/>
            <person name="Baker S."/>
            <person name="Bason N."/>
            <person name="Brooks K."/>
            <person name="Chillingworth T."/>
            <person name="Cronin A."/>
            <person name="Davis P."/>
            <person name="Dowd L."/>
            <person name="Fraser A."/>
            <person name="Feltwell T."/>
            <person name="Hance Z."/>
            <person name="Holroyd S."/>
            <person name="Jagels K."/>
            <person name="Moule S."/>
            <person name="Mungall K."/>
            <person name="Price C."/>
            <person name="Rabbinowitsch E."/>
            <person name="Sharp S."/>
            <person name="Simmonds M."/>
            <person name="Stevens K."/>
            <person name="Unwin L."/>
            <person name="Whithead S."/>
            <person name="Dupuy B."/>
            <person name="Dougan G."/>
            <person name="Barrell B."/>
            <person name="Parkhill J."/>
        </authorList>
    </citation>
    <scope>NUCLEOTIDE SEQUENCE [LARGE SCALE GENOMIC DNA]</scope>
    <source>
        <strain>630</strain>
    </source>
</reference>
<sequence length="459" mass="51178">MFIDDTIAAIATAPGEGGIGILRISGEKALKVAEEIFKSMSGKSIEEYNKRTLIYGNIVDNENIIDEVLLAYMKGPNSYTGEDVIEINCHGGFISVKKILELILSKDVRLAEAGEFTKRAFLNGRIDLSQAEAVIDVIKAKTDIAHEVAQNQLEGSLSKKIRELRDKVTEILAHVEVAIDYPEEDIEHITYQTLKEKTDELKKDIKKLYDTAESGKILREGLKTVIVGKPNVGKSSLLNSILGENRAIVTDIPGTTRDVIEEFVNIKGIPLKIVDTAGIRDTDDIVEKIGVEKSKESFTSADLIVMVLDASRKLSEEDIEILEKLKDKQTIVLLNKNDLKQEIEEEKILKYVENNSIIKISALQQEGIEELQDKIESMVYKGSIKNNSSLVVTNSRHKDALSKAYKSATDALIALEQSMPFDFVEVDLKNIWDYLGYINGDTVTEDLLDNIFHNFCIGK</sequence>
<protein>
    <recommendedName>
        <fullName evidence="1">tRNA modification GTPase MnmE</fullName>
        <ecNumber evidence="1">3.6.-.-</ecNumber>
    </recommendedName>
</protein>
<feature type="chain" id="PRO_1000060035" description="tRNA modification GTPase MnmE">
    <location>
        <begin position="1"/>
        <end position="459"/>
    </location>
</feature>
<feature type="domain" description="TrmE-type G">
    <location>
        <begin position="221"/>
        <end position="380"/>
    </location>
</feature>
<feature type="binding site" evidence="1">
    <location>
        <position position="23"/>
    </location>
    <ligand>
        <name>(6S)-5-formyl-5,6,7,8-tetrahydrofolate</name>
        <dbReference type="ChEBI" id="CHEBI:57457"/>
    </ligand>
</feature>
<feature type="binding site" evidence="1">
    <location>
        <position position="86"/>
    </location>
    <ligand>
        <name>(6S)-5-formyl-5,6,7,8-tetrahydrofolate</name>
        <dbReference type="ChEBI" id="CHEBI:57457"/>
    </ligand>
</feature>
<feature type="binding site" evidence="1">
    <location>
        <position position="125"/>
    </location>
    <ligand>
        <name>(6S)-5-formyl-5,6,7,8-tetrahydrofolate</name>
        <dbReference type="ChEBI" id="CHEBI:57457"/>
    </ligand>
</feature>
<feature type="binding site" evidence="1">
    <location>
        <begin position="231"/>
        <end position="236"/>
    </location>
    <ligand>
        <name>GTP</name>
        <dbReference type="ChEBI" id="CHEBI:37565"/>
    </ligand>
</feature>
<feature type="binding site" evidence="1">
    <location>
        <position position="231"/>
    </location>
    <ligand>
        <name>K(+)</name>
        <dbReference type="ChEBI" id="CHEBI:29103"/>
    </ligand>
</feature>
<feature type="binding site" evidence="1">
    <location>
        <position position="235"/>
    </location>
    <ligand>
        <name>Mg(2+)</name>
        <dbReference type="ChEBI" id="CHEBI:18420"/>
    </ligand>
</feature>
<feature type="binding site" evidence="1">
    <location>
        <begin position="250"/>
        <end position="256"/>
    </location>
    <ligand>
        <name>GTP</name>
        <dbReference type="ChEBI" id="CHEBI:37565"/>
    </ligand>
</feature>
<feature type="binding site" evidence="1">
    <location>
        <position position="250"/>
    </location>
    <ligand>
        <name>K(+)</name>
        <dbReference type="ChEBI" id="CHEBI:29103"/>
    </ligand>
</feature>
<feature type="binding site" evidence="1">
    <location>
        <position position="252"/>
    </location>
    <ligand>
        <name>K(+)</name>
        <dbReference type="ChEBI" id="CHEBI:29103"/>
    </ligand>
</feature>
<feature type="binding site" evidence="1">
    <location>
        <position position="255"/>
    </location>
    <ligand>
        <name>K(+)</name>
        <dbReference type="ChEBI" id="CHEBI:29103"/>
    </ligand>
</feature>
<feature type="binding site" evidence="1">
    <location>
        <position position="256"/>
    </location>
    <ligand>
        <name>Mg(2+)</name>
        <dbReference type="ChEBI" id="CHEBI:18420"/>
    </ligand>
</feature>
<feature type="binding site" evidence="1">
    <location>
        <begin position="275"/>
        <end position="278"/>
    </location>
    <ligand>
        <name>GTP</name>
        <dbReference type="ChEBI" id="CHEBI:37565"/>
    </ligand>
</feature>
<feature type="binding site" evidence="1">
    <location>
        <position position="459"/>
    </location>
    <ligand>
        <name>(6S)-5-formyl-5,6,7,8-tetrahydrofolate</name>
        <dbReference type="ChEBI" id="CHEBI:57457"/>
    </ligand>
</feature>
<evidence type="ECO:0000255" key="1">
    <source>
        <dbReference type="HAMAP-Rule" id="MF_00379"/>
    </source>
</evidence>
<keyword id="KW-0963">Cytoplasm</keyword>
<keyword id="KW-0342">GTP-binding</keyword>
<keyword id="KW-0378">Hydrolase</keyword>
<keyword id="KW-0460">Magnesium</keyword>
<keyword id="KW-0479">Metal-binding</keyword>
<keyword id="KW-0547">Nucleotide-binding</keyword>
<keyword id="KW-0630">Potassium</keyword>
<keyword id="KW-1185">Reference proteome</keyword>
<keyword id="KW-0819">tRNA processing</keyword>
<organism>
    <name type="scientific">Clostridioides difficile (strain 630)</name>
    <name type="common">Peptoclostridium difficile</name>
    <dbReference type="NCBI Taxonomy" id="272563"/>
    <lineage>
        <taxon>Bacteria</taxon>
        <taxon>Bacillati</taxon>
        <taxon>Bacillota</taxon>
        <taxon>Clostridia</taxon>
        <taxon>Peptostreptococcales</taxon>
        <taxon>Peptostreptococcaceae</taxon>
        <taxon>Clostridioides</taxon>
    </lineage>
</organism>
<gene>
    <name evidence="1" type="primary">mnmE</name>
    <name evidence="1" type="synonym">trmE</name>
    <name type="ordered locus">CD630_36760</name>
</gene>
<comment type="function">
    <text evidence="1">Exhibits a very high intrinsic GTPase hydrolysis rate. Involved in the addition of a carboxymethylaminomethyl (cmnm) group at the wobble position (U34) of certain tRNAs, forming tRNA-cmnm(5)s(2)U34.</text>
</comment>
<comment type="cofactor">
    <cofactor evidence="1">
        <name>K(+)</name>
        <dbReference type="ChEBI" id="CHEBI:29103"/>
    </cofactor>
    <text evidence="1">Binds 1 potassium ion per subunit.</text>
</comment>
<comment type="subunit">
    <text evidence="1">Homodimer. Heterotetramer of two MnmE and two MnmG subunits.</text>
</comment>
<comment type="subcellular location">
    <subcellularLocation>
        <location evidence="1">Cytoplasm</location>
    </subcellularLocation>
</comment>
<comment type="similarity">
    <text evidence="1">Belongs to the TRAFAC class TrmE-Era-EngA-EngB-Septin-like GTPase superfamily. TrmE GTPase family.</text>
</comment>
<dbReference type="EC" id="3.6.-.-" evidence="1"/>
<dbReference type="EMBL" id="AM180355">
    <property type="protein sequence ID" value="CAJ70585.1"/>
    <property type="molecule type" value="Genomic_DNA"/>
</dbReference>
<dbReference type="RefSeq" id="WP_009898860.1">
    <property type="nucleotide sequence ID" value="NZ_JAUPES010000007.1"/>
</dbReference>
<dbReference type="RefSeq" id="YP_001090200.1">
    <property type="nucleotide sequence ID" value="NC_009089.1"/>
</dbReference>
<dbReference type="SMR" id="Q181S7"/>
<dbReference type="STRING" id="272563.CD630_36760"/>
<dbReference type="EnsemblBacteria" id="CAJ70585">
    <property type="protein sequence ID" value="CAJ70585"/>
    <property type="gene ID" value="CD630_36760"/>
</dbReference>
<dbReference type="GeneID" id="66356148"/>
<dbReference type="KEGG" id="cdf:CD630_36760"/>
<dbReference type="KEGG" id="pdc:CDIF630_04006"/>
<dbReference type="PATRIC" id="fig|272563.120.peg.3888"/>
<dbReference type="eggNOG" id="COG0486">
    <property type="taxonomic scope" value="Bacteria"/>
</dbReference>
<dbReference type="OrthoDB" id="9805918at2"/>
<dbReference type="PhylomeDB" id="Q181S7"/>
<dbReference type="BioCyc" id="PDIF272563:G12WB-3868-MONOMER"/>
<dbReference type="Proteomes" id="UP000001978">
    <property type="component" value="Chromosome"/>
</dbReference>
<dbReference type="GO" id="GO:0005829">
    <property type="term" value="C:cytosol"/>
    <property type="evidence" value="ECO:0007669"/>
    <property type="project" value="TreeGrafter"/>
</dbReference>
<dbReference type="GO" id="GO:0005525">
    <property type="term" value="F:GTP binding"/>
    <property type="evidence" value="ECO:0007669"/>
    <property type="project" value="UniProtKB-UniRule"/>
</dbReference>
<dbReference type="GO" id="GO:0003924">
    <property type="term" value="F:GTPase activity"/>
    <property type="evidence" value="ECO:0007669"/>
    <property type="project" value="UniProtKB-UniRule"/>
</dbReference>
<dbReference type="GO" id="GO:0046872">
    <property type="term" value="F:metal ion binding"/>
    <property type="evidence" value="ECO:0007669"/>
    <property type="project" value="UniProtKB-KW"/>
</dbReference>
<dbReference type="GO" id="GO:0030488">
    <property type="term" value="P:tRNA methylation"/>
    <property type="evidence" value="ECO:0007669"/>
    <property type="project" value="TreeGrafter"/>
</dbReference>
<dbReference type="GO" id="GO:0002098">
    <property type="term" value="P:tRNA wobble uridine modification"/>
    <property type="evidence" value="ECO:0007669"/>
    <property type="project" value="TreeGrafter"/>
</dbReference>
<dbReference type="CDD" id="cd04164">
    <property type="entry name" value="trmE"/>
    <property type="match status" value="1"/>
</dbReference>
<dbReference type="CDD" id="cd14858">
    <property type="entry name" value="TrmE_N"/>
    <property type="match status" value="1"/>
</dbReference>
<dbReference type="FunFam" id="3.30.1360.120:FF:000003">
    <property type="entry name" value="tRNA modification GTPase MnmE"/>
    <property type="match status" value="1"/>
</dbReference>
<dbReference type="FunFam" id="3.40.50.300:FF:000494">
    <property type="entry name" value="tRNA modification GTPase MnmE"/>
    <property type="match status" value="1"/>
</dbReference>
<dbReference type="Gene3D" id="3.40.50.300">
    <property type="entry name" value="P-loop containing nucleotide triphosphate hydrolases"/>
    <property type="match status" value="1"/>
</dbReference>
<dbReference type="Gene3D" id="3.30.1360.120">
    <property type="entry name" value="Probable tRNA modification gtpase trme, domain 1"/>
    <property type="match status" value="1"/>
</dbReference>
<dbReference type="Gene3D" id="1.20.120.430">
    <property type="entry name" value="tRNA modification GTPase MnmE domain 2"/>
    <property type="match status" value="1"/>
</dbReference>
<dbReference type="HAMAP" id="MF_00379">
    <property type="entry name" value="GTPase_MnmE"/>
    <property type="match status" value="1"/>
</dbReference>
<dbReference type="InterPro" id="IPR031168">
    <property type="entry name" value="G_TrmE"/>
</dbReference>
<dbReference type="InterPro" id="IPR006073">
    <property type="entry name" value="GTP-bd"/>
</dbReference>
<dbReference type="InterPro" id="IPR018948">
    <property type="entry name" value="GTP-bd_TrmE_N"/>
</dbReference>
<dbReference type="InterPro" id="IPR004520">
    <property type="entry name" value="GTPase_MnmE"/>
</dbReference>
<dbReference type="InterPro" id="IPR027368">
    <property type="entry name" value="MnmE_dom2"/>
</dbReference>
<dbReference type="InterPro" id="IPR025867">
    <property type="entry name" value="MnmE_helical"/>
</dbReference>
<dbReference type="InterPro" id="IPR027417">
    <property type="entry name" value="P-loop_NTPase"/>
</dbReference>
<dbReference type="InterPro" id="IPR005225">
    <property type="entry name" value="Small_GTP-bd"/>
</dbReference>
<dbReference type="InterPro" id="IPR027266">
    <property type="entry name" value="TrmE/GcvT_dom1"/>
</dbReference>
<dbReference type="NCBIfam" id="TIGR00450">
    <property type="entry name" value="mnmE_trmE_thdF"/>
    <property type="match status" value="1"/>
</dbReference>
<dbReference type="NCBIfam" id="NF003661">
    <property type="entry name" value="PRK05291.1-3"/>
    <property type="match status" value="1"/>
</dbReference>
<dbReference type="NCBIfam" id="TIGR00231">
    <property type="entry name" value="small_GTP"/>
    <property type="match status" value="1"/>
</dbReference>
<dbReference type="PANTHER" id="PTHR42714">
    <property type="entry name" value="TRNA MODIFICATION GTPASE GTPBP3"/>
    <property type="match status" value="1"/>
</dbReference>
<dbReference type="PANTHER" id="PTHR42714:SF2">
    <property type="entry name" value="TRNA MODIFICATION GTPASE GTPBP3, MITOCHONDRIAL"/>
    <property type="match status" value="1"/>
</dbReference>
<dbReference type="Pfam" id="PF01926">
    <property type="entry name" value="MMR_HSR1"/>
    <property type="match status" value="1"/>
</dbReference>
<dbReference type="Pfam" id="PF12631">
    <property type="entry name" value="MnmE_helical"/>
    <property type="match status" value="1"/>
</dbReference>
<dbReference type="Pfam" id="PF10396">
    <property type="entry name" value="TrmE_N"/>
    <property type="match status" value="1"/>
</dbReference>
<dbReference type="PRINTS" id="PR00449">
    <property type="entry name" value="RASTRNSFRMNG"/>
</dbReference>
<dbReference type="SUPFAM" id="SSF52540">
    <property type="entry name" value="P-loop containing nucleoside triphosphate hydrolases"/>
    <property type="match status" value="1"/>
</dbReference>
<dbReference type="SUPFAM" id="SSF116878">
    <property type="entry name" value="TrmE connector domain"/>
    <property type="match status" value="1"/>
</dbReference>
<dbReference type="PROSITE" id="PS51709">
    <property type="entry name" value="G_TRME"/>
    <property type="match status" value="1"/>
</dbReference>